<sequence length="424" mass="47513">MASSNLIKQLQERGLVAQVTDEEALAERLAQGPIALYCGFDPTADSLHLGHLVPLLCLKRFQQAGHKPVALVGGATGLIGDPSFKAAERKLNTEETVQEWVDKIRKQVAPFLDFDCGENSAIAANNYDWFGNMNVLTFLRDIGKHFSVNQMINKEAVKQRLNREDQGISFTEFSYNLLQGYDFACLNKQYGVVLQIGGSDQWGNITSGIDLTRRLHQNQVFGLTVPLITKADGTKFGKTEGGAVWLDPKKTSPYKFYQFWINTADADVYRFLKFFTFMSIEEINALEEEDKNSGKAPRAQYVLAEQVTRLVHGEDGLQAAKRITECLFSGSLSALSEADFEQLAQDGVPMVEMEKGADLMQALVDSELQPSRGQARKTIASNAITINGEKQSDPEYFFKEEDRLFGRFTLLRRGKKNYCLICWK</sequence>
<feature type="chain" id="PRO_1000189288" description="Tyrosine--tRNA ligase">
    <location>
        <begin position="1"/>
        <end position="424"/>
    </location>
</feature>
<feature type="domain" description="S4 RNA-binding" evidence="1">
    <location>
        <begin position="357"/>
        <end position="414"/>
    </location>
</feature>
<feature type="short sequence motif" description="'HIGH' region">
    <location>
        <begin position="42"/>
        <end position="51"/>
    </location>
</feature>
<feature type="short sequence motif" description="'KMSKS' region">
    <location>
        <begin position="235"/>
        <end position="239"/>
    </location>
</feature>
<feature type="binding site" evidence="1">
    <location>
        <position position="37"/>
    </location>
    <ligand>
        <name>L-tyrosine</name>
        <dbReference type="ChEBI" id="CHEBI:58315"/>
    </ligand>
</feature>
<feature type="binding site" evidence="1">
    <location>
        <position position="175"/>
    </location>
    <ligand>
        <name>L-tyrosine</name>
        <dbReference type="ChEBI" id="CHEBI:58315"/>
    </ligand>
</feature>
<feature type="binding site" evidence="1">
    <location>
        <position position="179"/>
    </location>
    <ligand>
        <name>L-tyrosine</name>
        <dbReference type="ChEBI" id="CHEBI:58315"/>
    </ligand>
</feature>
<feature type="binding site" evidence="1">
    <location>
        <position position="238"/>
    </location>
    <ligand>
        <name>ATP</name>
        <dbReference type="ChEBI" id="CHEBI:30616"/>
    </ligand>
</feature>
<feature type="modified residue" description="N6-acetyllysine" evidence="1">
    <location>
        <position position="144"/>
    </location>
</feature>
<protein>
    <recommendedName>
        <fullName evidence="1">Tyrosine--tRNA ligase</fullName>
        <ecNumber evidence="1">6.1.1.1</ecNumber>
    </recommendedName>
    <alternativeName>
        <fullName evidence="1">Tyrosyl-tRNA synthetase</fullName>
        <shortName evidence="1">TyrRS</shortName>
    </alternativeName>
</protein>
<gene>
    <name evidence="1" type="primary">tyrS</name>
    <name type="ordered locus">ECS88_1685</name>
</gene>
<reference key="1">
    <citation type="journal article" date="2009" name="PLoS Genet.">
        <title>Organised genome dynamics in the Escherichia coli species results in highly diverse adaptive paths.</title>
        <authorList>
            <person name="Touchon M."/>
            <person name="Hoede C."/>
            <person name="Tenaillon O."/>
            <person name="Barbe V."/>
            <person name="Baeriswyl S."/>
            <person name="Bidet P."/>
            <person name="Bingen E."/>
            <person name="Bonacorsi S."/>
            <person name="Bouchier C."/>
            <person name="Bouvet O."/>
            <person name="Calteau A."/>
            <person name="Chiapello H."/>
            <person name="Clermont O."/>
            <person name="Cruveiller S."/>
            <person name="Danchin A."/>
            <person name="Diard M."/>
            <person name="Dossat C."/>
            <person name="Karoui M.E."/>
            <person name="Frapy E."/>
            <person name="Garry L."/>
            <person name="Ghigo J.M."/>
            <person name="Gilles A.M."/>
            <person name="Johnson J."/>
            <person name="Le Bouguenec C."/>
            <person name="Lescat M."/>
            <person name="Mangenot S."/>
            <person name="Martinez-Jehanne V."/>
            <person name="Matic I."/>
            <person name="Nassif X."/>
            <person name="Oztas S."/>
            <person name="Petit M.A."/>
            <person name="Pichon C."/>
            <person name="Rouy Z."/>
            <person name="Ruf C.S."/>
            <person name="Schneider D."/>
            <person name="Tourret J."/>
            <person name="Vacherie B."/>
            <person name="Vallenet D."/>
            <person name="Medigue C."/>
            <person name="Rocha E.P.C."/>
            <person name="Denamur E."/>
        </authorList>
    </citation>
    <scope>NUCLEOTIDE SEQUENCE [LARGE SCALE GENOMIC DNA]</scope>
    <source>
        <strain>S88 / ExPEC</strain>
    </source>
</reference>
<comment type="function">
    <text evidence="1">Catalyzes the attachment of tyrosine to tRNA(Tyr) in a two-step reaction: tyrosine is first activated by ATP to form Tyr-AMP and then transferred to the acceptor end of tRNA(Tyr).</text>
</comment>
<comment type="catalytic activity">
    <reaction evidence="1">
        <text>tRNA(Tyr) + L-tyrosine + ATP = L-tyrosyl-tRNA(Tyr) + AMP + diphosphate + H(+)</text>
        <dbReference type="Rhea" id="RHEA:10220"/>
        <dbReference type="Rhea" id="RHEA-COMP:9706"/>
        <dbReference type="Rhea" id="RHEA-COMP:9707"/>
        <dbReference type="ChEBI" id="CHEBI:15378"/>
        <dbReference type="ChEBI" id="CHEBI:30616"/>
        <dbReference type="ChEBI" id="CHEBI:33019"/>
        <dbReference type="ChEBI" id="CHEBI:58315"/>
        <dbReference type="ChEBI" id="CHEBI:78442"/>
        <dbReference type="ChEBI" id="CHEBI:78536"/>
        <dbReference type="ChEBI" id="CHEBI:456215"/>
        <dbReference type="EC" id="6.1.1.1"/>
    </reaction>
</comment>
<comment type="subunit">
    <text evidence="1">Homodimer.</text>
</comment>
<comment type="subcellular location">
    <subcellularLocation>
        <location evidence="1">Cytoplasm</location>
    </subcellularLocation>
</comment>
<comment type="similarity">
    <text evidence="1">Belongs to the class-I aminoacyl-tRNA synthetase family. TyrS type 1 subfamily.</text>
</comment>
<evidence type="ECO:0000255" key="1">
    <source>
        <dbReference type="HAMAP-Rule" id="MF_02006"/>
    </source>
</evidence>
<dbReference type="EC" id="6.1.1.1" evidence="1"/>
<dbReference type="EMBL" id="CU928161">
    <property type="protein sequence ID" value="CAR02998.1"/>
    <property type="molecule type" value="Genomic_DNA"/>
</dbReference>
<dbReference type="RefSeq" id="WP_001339629.1">
    <property type="nucleotide sequence ID" value="NC_011742.1"/>
</dbReference>
<dbReference type="SMR" id="B7M9Z1"/>
<dbReference type="KEGG" id="ecz:ECS88_1685"/>
<dbReference type="HOGENOM" id="CLU_024003_0_3_6"/>
<dbReference type="Proteomes" id="UP000000747">
    <property type="component" value="Chromosome"/>
</dbReference>
<dbReference type="GO" id="GO:0005829">
    <property type="term" value="C:cytosol"/>
    <property type="evidence" value="ECO:0007669"/>
    <property type="project" value="TreeGrafter"/>
</dbReference>
<dbReference type="GO" id="GO:0005524">
    <property type="term" value="F:ATP binding"/>
    <property type="evidence" value="ECO:0007669"/>
    <property type="project" value="UniProtKB-UniRule"/>
</dbReference>
<dbReference type="GO" id="GO:0003723">
    <property type="term" value="F:RNA binding"/>
    <property type="evidence" value="ECO:0007669"/>
    <property type="project" value="UniProtKB-KW"/>
</dbReference>
<dbReference type="GO" id="GO:0004831">
    <property type="term" value="F:tyrosine-tRNA ligase activity"/>
    <property type="evidence" value="ECO:0007669"/>
    <property type="project" value="UniProtKB-UniRule"/>
</dbReference>
<dbReference type="GO" id="GO:0006437">
    <property type="term" value="P:tyrosyl-tRNA aminoacylation"/>
    <property type="evidence" value="ECO:0007669"/>
    <property type="project" value="UniProtKB-UniRule"/>
</dbReference>
<dbReference type="CDD" id="cd00165">
    <property type="entry name" value="S4"/>
    <property type="match status" value="1"/>
</dbReference>
<dbReference type="CDD" id="cd00805">
    <property type="entry name" value="TyrRS_core"/>
    <property type="match status" value="1"/>
</dbReference>
<dbReference type="FunFam" id="1.10.240.10:FF:000001">
    <property type="entry name" value="Tyrosine--tRNA ligase"/>
    <property type="match status" value="1"/>
</dbReference>
<dbReference type="FunFam" id="3.10.290.10:FF:000007">
    <property type="entry name" value="Tyrosine--tRNA ligase"/>
    <property type="match status" value="1"/>
</dbReference>
<dbReference type="FunFam" id="3.40.50.620:FF:000008">
    <property type="entry name" value="Tyrosine--tRNA ligase"/>
    <property type="match status" value="1"/>
</dbReference>
<dbReference type="Gene3D" id="3.40.50.620">
    <property type="entry name" value="HUPs"/>
    <property type="match status" value="1"/>
</dbReference>
<dbReference type="Gene3D" id="3.10.290.10">
    <property type="entry name" value="RNA-binding S4 domain"/>
    <property type="match status" value="1"/>
</dbReference>
<dbReference type="Gene3D" id="1.10.240.10">
    <property type="entry name" value="Tyrosyl-Transfer RNA Synthetase"/>
    <property type="match status" value="1"/>
</dbReference>
<dbReference type="HAMAP" id="MF_02006">
    <property type="entry name" value="Tyr_tRNA_synth_type1"/>
    <property type="match status" value="1"/>
</dbReference>
<dbReference type="InterPro" id="IPR001412">
    <property type="entry name" value="aa-tRNA-synth_I_CS"/>
</dbReference>
<dbReference type="InterPro" id="IPR002305">
    <property type="entry name" value="aa-tRNA-synth_Ic"/>
</dbReference>
<dbReference type="InterPro" id="IPR014729">
    <property type="entry name" value="Rossmann-like_a/b/a_fold"/>
</dbReference>
<dbReference type="InterPro" id="IPR002942">
    <property type="entry name" value="S4_RNA-bd"/>
</dbReference>
<dbReference type="InterPro" id="IPR036986">
    <property type="entry name" value="S4_RNA-bd_sf"/>
</dbReference>
<dbReference type="InterPro" id="IPR054608">
    <property type="entry name" value="SYY-like_C"/>
</dbReference>
<dbReference type="InterPro" id="IPR002307">
    <property type="entry name" value="Tyr-tRNA-ligase"/>
</dbReference>
<dbReference type="InterPro" id="IPR024088">
    <property type="entry name" value="Tyr-tRNA-ligase_bac-type"/>
</dbReference>
<dbReference type="InterPro" id="IPR024107">
    <property type="entry name" value="Tyr-tRNA-ligase_bac_1"/>
</dbReference>
<dbReference type="NCBIfam" id="TIGR00234">
    <property type="entry name" value="tyrS"/>
    <property type="match status" value="1"/>
</dbReference>
<dbReference type="PANTHER" id="PTHR11766:SF0">
    <property type="entry name" value="TYROSINE--TRNA LIGASE, MITOCHONDRIAL"/>
    <property type="match status" value="1"/>
</dbReference>
<dbReference type="PANTHER" id="PTHR11766">
    <property type="entry name" value="TYROSYL-TRNA SYNTHETASE"/>
    <property type="match status" value="1"/>
</dbReference>
<dbReference type="Pfam" id="PF22421">
    <property type="entry name" value="SYY_C-terminal"/>
    <property type="match status" value="1"/>
</dbReference>
<dbReference type="Pfam" id="PF00579">
    <property type="entry name" value="tRNA-synt_1b"/>
    <property type="match status" value="1"/>
</dbReference>
<dbReference type="PRINTS" id="PR01040">
    <property type="entry name" value="TRNASYNTHTYR"/>
</dbReference>
<dbReference type="SMART" id="SM00363">
    <property type="entry name" value="S4"/>
    <property type="match status" value="1"/>
</dbReference>
<dbReference type="SUPFAM" id="SSF55174">
    <property type="entry name" value="Alpha-L RNA-binding motif"/>
    <property type="match status" value="1"/>
</dbReference>
<dbReference type="SUPFAM" id="SSF52374">
    <property type="entry name" value="Nucleotidylyl transferase"/>
    <property type="match status" value="1"/>
</dbReference>
<dbReference type="PROSITE" id="PS00178">
    <property type="entry name" value="AA_TRNA_LIGASE_I"/>
    <property type="match status" value="1"/>
</dbReference>
<dbReference type="PROSITE" id="PS50889">
    <property type="entry name" value="S4"/>
    <property type="match status" value="1"/>
</dbReference>
<organism>
    <name type="scientific">Escherichia coli O45:K1 (strain S88 / ExPEC)</name>
    <dbReference type="NCBI Taxonomy" id="585035"/>
    <lineage>
        <taxon>Bacteria</taxon>
        <taxon>Pseudomonadati</taxon>
        <taxon>Pseudomonadota</taxon>
        <taxon>Gammaproteobacteria</taxon>
        <taxon>Enterobacterales</taxon>
        <taxon>Enterobacteriaceae</taxon>
        <taxon>Escherichia</taxon>
    </lineage>
</organism>
<accession>B7M9Z1</accession>
<name>SYY_ECO45</name>
<proteinExistence type="inferred from homology"/>
<keyword id="KW-0007">Acetylation</keyword>
<keyword id="KW-0030">Aminoacyl-tRNA synthetase</keyword>
<keyword id="KW-0067">ATP-binding</keyword>
<keyword id="KW-0963">Cytoplasm</keyword>
<keyword id="KW-0436">Ligase</keyword>
<keyword id="KW-0547">Nucleotide-binding</keyword>
<keyword id="KW-0648">Protein biosynthesis</keyword>
<keyword id="KW-1185">Reference proteome</keyword>
<keyword id="KW-0694">RNA-binding</keyword>